<organism>
    <name type="scientific">Histophilus somni (strain 129Pt)</name>
    <name type="common">Haemophilus somnus</name>
    <dbReference type="NCBI Taxonomy" id="205914"/>
    <lineage>
        <taxon>Bacteria</taxon>
        <taxon>Pseudomonadati</taxon>
        <taxon>Pseudomonadota</taxon>
        <taxon>Gammaproteobacteria</taxon>
        <taxon>Pasteurellales</taxon>
        <taxon>Pasteurellaceae</taxon>
        <taxon>Histophilus</taxon>
    </lineage>
</organism>
<dbReference type="EMBL" id="CP000436">
    <property type="protein sequence ID" value="ABI25969.1"/>
    <property type="molecule type" value="Genomic_DNA"/>
</dbReference>
<dbReference type="SMR" id="Q0I5W8"/>
<dbReference type="KEGG" id="hso:HS_1701"/>
<dbReference type="eggNOG" id="ENOG5032S3K">
    <property type="taxonomic scope" value="Bacteria"/>
</dbReference>
<dbReference type="HOGENOM" id="CLU_148047_1_0_6"/>
<dbReference type="GO" id="GO:0005886">
    <property type="term" value="C:plasma membrane"/>
    <property type="evidence" value="ECO:0007669"/>
    <property type="project" value="UniProtKB-SubCell"/>
</dbReference>
<dbReference type="GO" id="GO:0045259">
    <property type="term" value="C:proton-transporting ATP synthase complex"/>
    <property type="evidence" value="ECO:0007669"/>
    <property type="project" value="UniProtKB-KW"/>
</dbReference>
<dbReference type="GO" id="GO:0033177">
    <property type="term" value="C:proton-transporting two-sector ATPase complex, proton-transporting domain"/>
    <property type="evidence" value="ECO:0007669"/>
    <property type="project" value="InterPro"/>
</dbReference>
<dbReference type="GO" id="GO:0008289">
    <property type="term" value="F:lipid binding"/>
    <property type="evidence" value="ECO:0007669"/>
    <property type="project" value="UniProtKB-KW"/>
</dbReference>
<dbReference type="GO" id="GO:0046933">
    <property type="term" value="F:proton-transporting ATP synthase activity, rotational mechanism"/>
    <property type="evidence" value="ECO:0007669"/>
    <property type="project" value="UniProtKB-UniRule"/>
</dbReference>
<dbReference type="CDD" id="cd18185">
    <property type="entry name" value="ATP-synt_Fo_c_ATPE"/>
    <property type="match status" value="1"/>
</dbReference>
<dbReference type="FunFam" id="1.20.20.10:FF:000002">
    <property type="entry name" value="ATP synthase subunit c"/>
    <property type="match status" value="1"/>
</dbReference>
<dbReference type="Gene3D" id="1.20.20.10">
    <property type="entry name" value="F1F0 ATP synthase subunit C"/>
    <property type="match status" value="1"/>
</dbReference>
<dbReference type="HAMAP" id="MF_01396">
    <property type="entry name" value="ATP_synth_c_bact"/>
    <property type="match status" value="1"/>
</dbReference>
<dbReference type="InterPro" id="IPR005953">
    <property type="entry name" value="ATP_synth_csu_bac/chlpt"/>
</dbReference>
<dbReference type="InterPro" id="IPR000454">
    <property type="entry name" value="ATP_synth_F0_csu"/>
</dbReference>
<dbReference type="InterPro" id="IPR020537">
    <property type="entry name" value="ATP_synth_F0_csu_DDCD_BS"/>
</dbReference>
<dbReference type="InterPro" id="IPR038662">
    <property type="entry name" value="ATP_synth_F0_csu_sf"/>
</dbReference>
<dbReference type="InterPro" id="IPR002379">
    <property type="entry name" value="ATPase_proteolipid_c-like_dom"/>
</dbReference>
<dbReference type="InterPro" id="IPR035921">
    <property type="entry name" value="F/V-ATP_Csub_sf"/>
</dbReference>
<dbReference type="NCBIfam" id="TIGR01260">
    <property type="entry name" value="ATP_synt_c"/>
    <property type="match status" value="1"/>
</dbReference>
<dbReference type="NCBIfam" id="NF005363">
    <property type="entry name" value="PRK06876.1"/>
    <property type="match status" value="1"/>
</dbReference>
<dbReference type="Pfam" id="PF00137">
    <property type="entry name" value="ATP-synt_C"/>
    <property type="match status" value="1"/>
</dbReference>
<dbReference type="SUPFAM" id="SSF81333">
    <property type="entry name" value="F1F0 ATP synthase subunit C"/>
    <property type="match status" value="1"/>
</dbReference>
<dbReference type="PROSITE" id="PS00605">
    <property type="entry name" value="ATPASE_C"/>
    <property type="match status" value="1"/>
</dbReference>
<accession>Q0I5W8</accession>
<sequence>MENIITATIFGSVILLAVAALATAIGFSLLGGKFLESSARQPELAASLQTKMFIVAGLLDAISMIAVGIALLFIFANPFIGLLN</sequence>
<proteinExistence type="inferred from homology"/>
<name>ATPL_HISS1</name>
<reference key="1">
    <citation type="journal article" date="2007" name="J. Bacteriol.">
        <title>Complete genome sequence of Haemophilus somnus (Histophilus somni) strain 129Pt and comparison to Haemophilus ducreyi 35000HP and Haemophilus influenzae Rd.</title>
        <authorList>
            <person name="Challacombe J.F."/>
            <person name="Duncan A.J."/>
            <person name="Brettin T.S."/>
            <person name="Bruce D."/>
            <person name="Chertkov O."/>
            <person name="Detter J.C."/>
            <person name="Han C.S."/>
            <person name="Misra M."/>
            <person name="Richardson P."/>
            <person name="Tapia R."/>
            <person name="Thayer N."/>
            <person name="Xie G."/>
            <person name="Inzana T.J."/>
        </authorList>
    </citation>
    <scope>NUCLEOTIDE SEQUENCE [LARGE SCALE GENOMIC DNA]</scope>
    <source>
        <strain>129Pt</strain>
    </source>
</reference>
<protein>
    <recommendedName>
        <fullName evidence="1">ATP synthase subunit c</fullName>
    </recommendedName>
    <alternativeName>
        <fullName evidence="1">ATP synthase F(0) sector subunit c</fullName>
    </alternativeName>
    <alternativeName>
        <fullName evidence="1">F-type ATPase subunit c</fullName>
        <shortName evidence="1">F-ATPase subunit c</shortName>
    </alternativeName>
    <alternativeName>
        <fullName evidence="1">Lipid-binding protein</fullName>
    </alternativeName>
</protein>
<keyword id="KW-0066">ATP synthesis</keyword>
<keyword id="KW-0997">Cell inner membrane</keyword>
<keyword id="KW-1003">Cell membrane</keyword>
<keyword id="KW-0138">CF(0)</keyword>
<keyword id="KW-0375">Hydrogen ion transport</keyword>
<keyword id="KW-0406">Ion transport</keyword>
<keyword id="KW-0446">Lipid-binding</keyword>
<keyword id="KW-0472">Membrane</keyword>
<keyword id="KW-0812">Transmembrane</keyword>
<keyword id="KW-1133">Transmembrane helix</keyword>
<keyword id="KW-0813">Transport</keyword>
<comment type="function">
    <text evidence="1">F(1)F(0) ATP synthase produces ATP from ADP in the presence of a proton or sodium gradient. F-type ATPases consist of two structural domains, F(1) containing the extramembraneous catalytic core and F(0) containing the membrane proton channel, linked together by a central stalk and a peripheral stalk. During catalysis, ATP synthesis in the catalytic domain of F(1) is coupled via a rotary mechanism of the central stalk subunits to proton translocation.</text>
</comment>
<comment type="function">
    <text evidence="1">Key component of the F(0) channel; it plays a direct role in translocation across the membrane. A homomeric c-ring of between 10-14 subunits forms the central stalk rotor element with the F(1) delta and epsilon subunits.</text>
</comment>
<comment type="subunit">
    <text evidence="1">F-type ATPases have 2 components, F(1) - the catalytic core - and F(0) - the membrane proton channel. F(1) has five subunits: alpha(3), beta(3), gamma(1), delta(1), epsilon(1). F(0) has three main subunits: a(1), b(2) and c(10-14). The alpha and beta chains form an alternating ring which encloses part of the gamma chain. F(1) is attached to F(0) by a central stalk formed by the gamma and epsilon chains, while a peripheral stalk is formed by the delta and b chains.</text>
</comment>
<comment type="subcellular location">
    <subcellularLocation>
        <location evidence="1">Cell inner membrane</location>
        <topology evidence="1">Multi-pass membrane protein</topology>
    </subcellularLocation>
</comment>
<comment type="similarity">
    <text evidence="1">Belongs to the ATPase C chain family.</text>
</comment>
<gene>
    <name evidence="1" type="primary">atpE</name>
    <name type="ordered locus">HS_1701</name>
</gene>
<evidence type="ECO:0000255" key="1">
    <source>
        <dbReference type="HAMAP-Rule" id="MF_01396"/>
    </source>
</evidence>
<feature type="chain" id="PRO_1000184389" description="ATP synthase subunit c">
    <location>
        <begin position="1"/>
        <end position="84"/>
    </location>
</feature>
<feature type="transmembrane region" description="Helical" evidence="1">
    <location>
        <begin position="9"/>
        <end position="29"/>
    </location>
</feature>
<feature type="transmembrane region" description="Helical" evidence="1">
    <location>
        <begin position="54"/>
        <end position="74"/>
    </location>
</feature>
<feature type="site" description="Reversibly protonated during proton transport" evidence="1">
    <location>
        <position position="60"/>
    </location>
</feature>